<geneLocation type="mitochondrion"/>
<sequence>MPVVYVNIFLAFIVSLMGLLIYRSHLMSSLLCLEGMMLSLFVMLTVTVLNNHFTLANMAPIILLVFAACEAALGLSLLVMVSNTYGTDYVQNLNLLQC</sequence>
<reference key="1">
    <citation type="journal article" date="2002" name="Mol. Biol. Evol.">
        <title>Conserved primers for rapid sequencing of the complete mitochondrial genome from carnivores, applied to three species of bears.</title>
        <authorList>
            <person name="Delisle I."/>
            <person name="Strobeck C."/>
        </authorList>
    </citation>
    <scope>NUCLEOTIDE SEQUENCE [GENOMIC DNA]</scope>
</reference>
<name>NU4LM_URSAM</name>
<keyword id="KW-0249">Electron transport</keyword>
<keyword id="KW-0472">Membrane</keyword>
<keyword id="KW-0496">Mitochondrion</keyword>
<keyword id="KW-0999">Mitochondrion inner membrane</keyword>
<keyword id="KW-0520">NAD</keyword>
<keyword id="KW-1185">Reference proteome</keyword>
<keyword id="KW-0679">Respiratory chain</keyword>
<keyword id="KW-1278">Translocase</keyword>
<keyword id="KW-0812">Transmembrane</keyword>
<keyword id="KW-1133">Transmembrane helix</keyword>
<keyword id="KW-0813">Transport</keyword>
<keyword id="KW-0830">Ubiquinone</keyword>
<evidence type="ECO:0000250" key="1">
    <source>
        <dbReference type="UniProtKB" id="P03901"/>
    </source>
</evidence>
<evidence type="ECO:0000250" key="2">
    <source>
        <dbReference type="UniProtKB" id="P03902"/>
    </source>
</evidence>
<evidence type="ECO:0000255" key="3"/>
<evidence type="ECO:0000305" key="4"/>
<proteinExistence type="inferred from homology"/>
<feature type="chain" id="PRO_0000275137" description="NADH-ubiquinone oxidoreductase chain 4L">
    <location>
        <begin position="1"/>
        <end position="98"/>
    </location>
</feature>
<feature type="transmembrane region" description="Helical" evidence="3">
    <location>
        <begin position="1"/>
        <end position="21"/>
    </location>
</feature>
<feature type="transmembrane region" description="Helical" evidence="3">
    <location>
        <begin position="29"/>
        <end position="49"/>
    </location>
</feature>
<feature type="transmembrane region" description="Helical" evidence="3">
    <location>
        <begin position="61"/>
        <end position="81"/>
    </location>
</feature>
<comment type="function">
    <text evidence="1">Core subunit of the mitochondrial membrane respiratory chain NADH dehydrogenase (Complex I) which catalyzes electron transfer from NADH through the respiratory chain, using ubiquinone as an electron acceptor. Part of the enzyme membrane arm which is embedded in the lipid bilayer and involved in proton translocation.</text>
</comment>
<comment type="catalytic activity">
    <reaction evidence="1">
        <text>a ubiquinone + NADH + 5 H(+)(in) = a ubiquinol + NAD(+) + 4 H(+)(out)</text>
        <dbReference type="Rhea" id="RHEA:29091"/>
        <dbReference type="Rhea" id="RHEA-COMP:9565"/>
        <dbReference type="Rhea" id="RHEA-COMP:9566"/>
        <dbReference type="ChEBI" id="CHEBI:15378"/>
        <dbReference type="ChEBI" id="CHEBI:16389"/>
        <dbReference type="ChEBI" id="CHEBI:17976"/>
        <dbReference type="ChEBI" id="CHEBI:57540"/>
        <dbReference type="ChEBI" id="CHEBI:57945"/>
        <dbReference type="EC" id="7.1.1.2"/>
    </reaction>
    <physiologicalReaction direction="left-to-right" evidence="1">
        <dbReference type="Rhea" id="RHEA:29092"/>
    </physiologicalReaction>
</comment>
<comment type="subunit">
    <text evidence="2">Core subunit of respiratory chain NADH dehydrogenase (Complex I) which is composed of 45 different subunits.</text>
</comment>
<comment type="subcellular location">
    <subcellularLocation>
        <location evidence="2">Mitochondrion inner membrane</location>
        <topology evidence="3">Multi-pass membrane protein</topology>
    </subcellularLocation>
</comment>
<comment type="similarity">
    <text evidence="4">Belongs to the complex I subunit 4L family.</text>
</comment>
<protein>
    <recommendedName>
        <fullName>NADH-ubiquinone oxidoreductase chain 4L</fullName>
        <ecNumber>7.1.1.2</ecNumber>
    </recommendedName>
    <alternativeName>
        <fullName>NADH dehydrogenase subunit 4L</fullName>
    </alternativeName>
</protein>
<accession>Q8SJJ1</accession>
<dbReference type="EC" id="7.1.1.2"/>
<dbReference type="EMBL" id="AF303109">
    <property type="protein sequence ID" value="AAL85163.1"/>
    <property type="molecule type" value="Genomic_DNA"/>
</dbReference>
<dbReference type="RefSeq" id="NP_597963.1">
    <property type="nucleotide sequence ID" value="NC_003426.1"/>
</dbReference>
<dbReference type="SMR" id="Q8SJJ1"/>
<dbReference type="GeneID" id="804842"/>
<dbReference type="KEGG" id="uar:804842"/>
<dbReference type="CTD" id="4539"/>
<dbReference type="OrthoDB" id="19063at33554"/>
<dbReference type="Proteomes" id="UP000291022">
    <property type="component" value="Unassembled WGS sequence"/>
</dbReference>
<dbReference type="GO" id="GO:0005743">
    <property type="term" value="C:mitochondrial inner membrane"/>
    <property type="evidence" value="ECO:0000250"/>
    <property type="project" value="UniProtKB"/>
</dbReference>
<dbReference type="GO" id="GO:0045271">
    <property type="term" value="C:respiratory chain complex I"/>
    <property type="evidence" value="ECO:0000250"/>
    <property type="project" value="UniProtKB"/>
</dbReference>
<dbReference type="GO" id="GO:0008137">
    <property type="term" value="F:NADH dehydrogenase (ubiquinone) activity"/>
    <property type="evidence" value="ECO:0000250"/>
    <property type="project" value="UniProtKB"/>
</dbReference>
<dbReference type="GO" id="GO:0042773">
    <property type="term" value="P:ATP synthesis coupled electron transport"/>
    <property type="evidence" value="ECO:0007669"/>
    <property type="project" value="InterPro"/>
</dbReference>
<dbReference type="FunFam" id="1.10.287.3510:FF:000002">
    <property type="entry name" value="NADH-ubiquinone oxidoreductase chain 4L"/>
    <property type="match status" value="1"/>
</dbReference>
<dbReference type="Gene3D" id="1.10.287.3510">
    <property type="match status" value="1"/>
</dbReference>
<dbReference type="InterPro" id="IPR001133">
    <property type="entry name" value="NADH_UbQ_OxRdtase_chain4L/K"/>
</dbReference>
<dbReference type="InterPro" id="IPR039428">
    <property type="entry name" value="NUOK/Mnh_C1-like"/>
</dbReference>
<dbReference type="PANTHER" id="PTHR11434:SF0">
    <property type="entry name" value="NADH-UBIQUINONE OXIDOREDUCTASE CHAIN 4L"/>
    <property type="match status" value="1"/>
</dbReference>
<dbReference type="PANTHER" id="PTHR11434">
    <property type="entry name" value="NADH-UBIQUINONE OXIDOREDUCTASE SUBUNIT ND4L"/>
    <property type="match status" value="1"/>
</dbReference>
<dbReference type="Pfam" id="PF00420">
    <property type="entry name" value="Oxidored_q2"/>
    <property type="match status" value="1"/>
</dbReference>
<gene>
    <name type="primary">MT-ND4L</name>
    <name type="synonym">MTND4L</name>
    <name type="synonym">NADH4L</name>
    <name type="synonym">ND4L</name>
</gene>
<organism>
    <name type="scientific">Ursus americanus</name>
    <name type="common">American black bear</name>
    <name type="synonym">Euarctos americanus</name>
    <dbReference type="NCBI Taxonomy" id="9643"/>
    <lineage>
        <taxon>Eukaryota</taxon>
        <taxon>Metazoa</taxon>
        <taxon>Chordata</taxon>
        <taxon>Craniata</taxon>
        <taxon>Vertebrata</taxon>
        <taxon>Euteleostomi</taxon>
        <taxon>Mammalia</taxon>
        <taxon>Eutheria</taxon>
        <taxon>Laurasiatheria</taxon>
        <taxon>Carnivora</taxon>
        <taxon>Caniformia</taxon>
        <taxon>Ursidae</taxon>
        <taxon>Ursus</taxon>
    </lineage>
</organism>